<name>FAS2_CANPC</name>
<evidence type="ECO:0000250" key="1"/>
<evidence type="ECO:0000255" key="2">
    <source>
        <dbReference type="PROSITE-ProRule" id="PRU00258"/>
    </source>
</evidence>
<evidence type="ECO:0000255" key="3">
    <source>
        <dbReference type="PROSITE-ProRule" id="PRU01348"/>
    </source>
</evidence>
<evidence type="ECO:0000256" key="4">
    <source>
        <dbReference type="SAM" id="MobiDB-lite"/>
    </source>
</evidence>
<evidence type="ECO:0000269" key="5">
    <source>
    </source>
</evidence>
<evidence type="ECO:0000269" key="6">
    <source>
    </source>
</evidence>
<evidence type="ECO:0000305" key="7"/>
<evidence type="ECO:0000305" key="8">
    <source>
    </source>
</evidence>
<reference key="1">
    <citation type="journal article" date="2009" name="Nature">
        <title>Evolution of pathogenicity and sexual reproduction in eight Candida genomes.</title>
        <authorList>
            <person name="Butler G."/>
            <person name="Rasmussen M.D."/>
            <person name="Lin M.F."/>
            <person name="Santos M.A.S."/>
            <person name="Sakthikumar S."/>
            <person name="Munro C.A."/>
            <person name="Rheinbay E."/>
            <person name="Grabherr M."/>
            <person name="Forche A."/>
            <person name="Reedy J.L."/>
            <person name="Agrafioti I."/>
            <person name="Arnaud M.B."/>
            <person name="Bates S."/>
            <person name="Brown A.J.P."/>
            <person name="Brunke S."/>
            <person name="Costanzo M.C."/>
            <person name="Fitzpatrick D.A."/>
            <person name="de Groot P.W.J."/>
            <person name="Harris D."/>
            <person name="Hoyer L.L."/>
            <person name="Hube B."/>
            <person name="Klis F.M."/>
            <person name="Kodira C."/>
            <person name="Lennard N."/>
            <person name="Logue M.E."/>
            <person name="Martin R."/>
            <person name="Neiman A.M."/>
            <person name="Nikolaou E."/>
            <person name="Quail M.A."/>
            <person name="Quinn J."/>
            <person name="Santos M.C."/>
            <person name="Schmitzberger F.F."/>
            <person name="Sherlock G."/>
            <person name="Shah P."/>
            <person name="Silverstein K.A.T."/>
            <person name="Skrzypek M.S."/>
            <person name="Soll D."/>
            <person name="Staggs R."/>
            <person name="Stansfield I."/>
            <person name="Stumpf M.P.H."/>
            <person name="Sudbery P.E."/>
            <person name="Srikantha T."/>
            <person name="Zeng Q."/>
            <person name="Berman J."/>
            <person name="Berriman M."/>
            <person name="Heitman J."/>
            <person name="Gow N.A.R."/>
            <person name="Lorenz M.C."/>
            <person name="Birren B.W."/>
            <person name="Kellis M."/>
            <person name="Cuomo C.A."/>
        </authorList>
    </citation>
    <scope>NUCLEOTIDE SEQUENCE [LARGE SCALE GENOMIC DNA]</scope>
    <source>
        <strain>CDC 317 / ATCC MYA-4646</strain>
    </source>
</reference>
<reference key="2">
    <citation type="journal article" date="2011" name="BMC Genomics">
        <title>Using RNA-seq to determine the transcriptional landscape and the hypoxic response of the pathogenic yeast Candida parapsilosis.</title>
        <authorList>
            <person name="Guida A."/>
            <person name="Lindstaedt C."/>
            <person name="Maguire S.L."/>
            <person name="Ding C."/>
            <person name="Higgins D.G."/>
            <person name="Corton N.J."/>
            <person name="Berriman M."/>
            <person name="Butler G."/>
        </authorList>
    </citation>
    <scope>GENOME REANNOTATION</scope>
    <source>
        <strain>CDC 317 / ATCC MYA-4646</strain>
    </source>
</reference>
<reference key="3">
    <citation type="journal article" date="2009" name="Eukaryot. Cell">
        <title>Correlation between biofilm formation and the hypoxic response in Candida parapsilosis.</title>
        <authorList>
            <person name="Rossignol T."/>
            <person name="Ding C."/>
            <person name="Guida A."/>
            <person name="d'Enfert C."/>
            <person name="Higgins D.G."/>
            <person name="Butler G."/>
        </authorList>
    </citation>
    <scope>INDUCTION BY HYPOXIA AND BIOFILM FORMATION</scope>
</reference>
<reference key="4">
    <citation type="journal article" date="2009" name="PLoS ONE">
        <title>Fatty acid synthase impacts the pathobiology of Candida parapsilosis in vitro and during mammalian infection.</title>
        <authorList>
            <person name="Nguyen L.N."/>
            <person name="Trofa D."/>
            <person name="Nosanchuk J.D."/>
        </authorList>
    </citation>
    <scope>FUNCTION</scope>
    <scope>INDUCTION BY CARBON SOURCES</scope>
    <scope>DISRUPTION PHENOTYPE</scope>
</reference>
<sequence length="1884" mass="206941">MKPEIEQELSHTLLTELLAYQFASPVRWIETQDVFLKQHNTERVIEIGPSPTLAGMASRTIKAKYQSYDAALSLQRQVLCYSKDAKEIYYTPDPAEPPAAEEPKAETGKESAPAASAAAAAATQPAAAVAPPPQSAGPVESIPDEPVKASLLIHVLVAQKLKKPLDAVPMSKAIKDLVNGKSTVQNEILGDLGKEFGSTPEKPEETPLEELAEQFQDTFSGSLGKTSTSLIGRLMSSKMPGGFSITNARKYLESRFGLGPGRQDSVLLTALCNEPASRLGSEGDAKSFLDTMAQKYASHAGISLSSPSAGGASSGAGAAVVDSAALDALIAENKKLARQQLETLARYLQVDLTKGEKAFIKEKEATTVLQQELDLWEAEHGEFYAKGIKPVFSPLKSRTYDSYWNWARQDLLSMWFDILFGKLTSVDRETINQCIQIMNRANPTLIKFMQYHVELCPTYRGETYKLGKRLGEQLIENCKQILGQSPVYKDVSRITGPKTTVSAKGDIVYEEANKESVRKFEQYVFEMAQGGSMTKMKQSSIQEDLARVYKAISKQASRDSKLELQKVYDQLLKVVEGSTEIETEQTTQDALAIPTGSNTPTEEDELSTASDDDEIASLPDKTSIAQPVSSTIPNKTIPFLHIQSKSESGNWEYDRKLSSIYLDGLESAAINGLTFKDKYVLVTGAGAGSIGAEILQGLISGGAKVIVTTSRYSKKVTEYYQNMYARYGAAGSTLIVVPFNQGSKQDVDALVEYIYNDQKKGGLGWDLDVIIPFAAIPENGNGIDNIDSKSEFAHRIMLTNLLRLLGAVKARKTTDTRPAQCILPLSPNHGTFGFDGLYSESKISLETLFNRWYSEDWGTKLTICGAIIGWTRGTGLMSANNIIAEGIEKLGVRTFSQKEMAFNILGLLTPEIVNLCQEEPVMADLNGGLQFIDNLKEFTSKLRNDLTETADIRRAVSIESAIEQKVVNGDNVDSNYNKVTVRPRANMKFDFPTLKSYDEIKQIAPDLEGMLDLENVVVVTGFAEVGPWGNARTRWEMESKGEFSLEGAIEMAWIMGMIKYHNGNLKGKPYSGWIDAKTQTPVDDKDIKAKYEEEILEHSGIRLIEPELFNGYDPKKKQMIQEVVIQHDLEPFECSKETAEQYKHEHGDKCEISEIEESGEYSVRILKGATLFIPKALRFDRLVAGQIPTGWDARTYGIPEDTINQVDPITLYVLVATVEALLSAGITDPYEFYKYVHVSEVGNCSGSGMGGVSALRGMFKDRYADKPVQNDILQESFINTMSAWVNMLLLSASGPIKTPVGACATAVESVDIGIETILSGKAKVVMVGGYDDFQEEGSYEFANMNATSSAIDEFKHGRTPKEMSRPTTTTRNGFMEAQGSGIQVIMSADLALKMGVPIHAVLAMSATATDKIGRSVPAPGKGILTTAREHHGNLKYPSPLLNVKYRKRQLSKRLDQIKSWESSELNYLQEEAHLAKEEFGEEFSEAEFLRERTEEIYRESKRQVADAKKQWGNAFYKSDPRIAPLRGALATFNLTIDDIGVASFHGTSTVANDKNESATIDSMMKHLGRSEGNPVFGVFQKYLTGHPKGAAGAWMLNGAIQILESGIVPGNRNADNVDKVLEQYEYVLYPSRSIQTDGIKAVSVTSFGFGQKGAQAVVVHPDYLYAVLDRSTYEDYAKRVTARNKKTYRYMHNAITRNTMFVAKDKAPYSDELTMDVYLDPLARVSKTKNEFVFTKKSVQSDKSYVSNIANSTAKALSSLNKSSKGVGVDVELLSELNIDNETFLERNFTPEEIKYCQNSANPQASFTGTWSAKEATFKALGVSSQGGGASLKEIEIVRDGNGAPQVVLNDNAKAAAKAAGVKNVNVSISHDDFQATAVALSEF</sequence>
<protein>
    <recommendedName>
        <fullName>Fatty acid synthase subunit alpha</fullName>
        <ecNumber>2.3.1.86</ecNumber>
    </recommendedName>
    <domain>
        <recommendedName>
            <fullName>Acyl carrier</fullName>
        </recommendedName>
    </domain>
    <domain>
        <recommendedName>
            <fullName>3-oxoacyl-[acyl-carrier-protein] reductase</fullName>
            <ecNumber>1.1.1.100</ecNumber>
        </recommendedName>
        <alternativeName>
            <fullName>Beta-ketoacyl reductase</fullName>
        </alternativeName>
    </domain>
    <domain>
        <recommendedName>
            <fullName>3-oxoacyl-[acyl-carrier-protein] synthase</fullName>
            <ecNumber>2.3.1.41</ecNumber>
        </recommendedName>
        <alternativeName>
            <fullName>Beta-ketoacyl synthase</fullName>
        </alternativeName>
    </domain>
</protein>
<gene>
    <name type="primary">FAS2</name>
    <name type="ordered locus">CPAR2_807400</name>
</gene>
<feature type="chain" id="PRO_0000419251" description="Fatty acid synthase subunit alpha">
    <location>
        <begin position="1"/>
        <end position="1884"/>
    </location>
</feature>
<feature type="domain" description="Carrier" evidence="2">
    <location>
        <begin position="147"/>
        <end position="222"/>
    </location>
</feature>
<feature type="domain" description="Ketosynthase family 3 (KS3)" evidence="3">
    <location>
        <begin position="1120"/>
        <end position="1660"/>
    </location>
</feature>
<feature type="region of interest" description="Disordered" evidence="4">
    <location>
        <begin position="91"/>
        <end position="141"/>
    </location>
</feature>
<feature type="region of interest" description="Disordered" evidence="4">
    <location>
        <begin position="583"/>
        <end position="613"/>
    </location>
</feature>
<feature type="region of interest" description="Beta-ketoacyl reductase" evidence="1">
    <location>
        <begin position="677"/>
        <end position="873"/>
    </location>
</feature>
<feature type="compositionally biased region" description="Low complexity" evidence="4">
    <location>
        <begin position="111"/>
        <end position="129"/>
    </location>
</feature>
<feature type="compositionally biased region" description="Polar residues" evidence="4">
    <location>
        <begin position="584"/>
        <end position="600"/>
    </location>
</feature>
<feature type="compositionally biased region" description="Acidic residues" evidence="4">
    <location>
        <begin position="601"/>
        <end position="613"/>
    </location>
</feature>
<feature type="active site" description="For beta-ketoacyl synthase activity" evidence="3">
    <location>
        <position position="1303"/>
    </location>
</feature>
<feature type="active site" description="For beta-ketoacyl synthase activity" evidence="3">
    <location>
        <position position="1545"/>
    </location>
</feature>
<feature type="active site" description="For beta-ketoacyl synthase activity" evidence="3">
    <location>
        <position position="1586"/>
    </location>
</feature>
<feature type="binding site" evidence="1">
    <location>
        <begin position="1770"/>
        <end position="1772"/>
    </location>
    <ligand>
        <name>acetyl-CoA</name>
        <dbReference type="ChEBI" id="CHEBI:57288"/>
    </ligand>
</feature>
<feature type="binding site" evidence="1">
    <location>
        <position position="1770"/>
    </location>
    <ligand>
        <name>Mg(2+)</name>
        <dbReference type="ChEBI" id="CHEBI:18420"/>
    </ligand>
</feature>
<feature type="binding site" evidence="1">
    <location>
        <position position="1771"/>
    </location>
    <ligand>
        <name>Mg(2+)</name>
        <dbReference type="ChEBI" id="CHEBI:18420"/>
    </ligand>
</feature>
<feature type="binding site" evidence="1">
    <location>
        <position position="1772"/>
    </location>
    <ligand>
        <name>Mg(2+)</name>
        <dbReference type="ChEBI" id="CHEBI:18420"/>
    </ligand>
</feature>
<feature type="binding site" evidence="1">
    <location>
        <position position="1796"/>
    </location>
    <ligand>
        <name>acetyl-CoA</name>
        <dbReference type="ChEBI" id="CHEBI:57288"/>
    </ligand>
</feature>
<feature type="binding site" evidence="1">
    <location>
        <position position="1806"/>
    </location>
    <ligand>
        <name>acetyl-CoA</name>
        <dbReference type="ChEBI" id="CHEBI:57288"/>
    </ligand>
</feature>
<feature type="binding site" evidence="1">
    <location>
        <begin position="1815"/>
        <end position="1825"/>
    </location>
    <ligand>
        <name>acetyl-CoA</name>
        <dbReference type="ChEBI" id="CHEBI:57288"/>
    </ligand>
</feature>
<feature type="binding site" evidence="1">
    <location>
        <begin position="1839"/>
        <end position="1842"/>
    </location>
    <ligand>
        <name>acetyl-CoA</name>
        <dbReference type="ChEBI" id="CHEBI:57288"/>
    </ligand>
</feature>
<feature type="binding site" evidence="1">
    <location>
        <begin position="1869"/>
        <end position="1871"/>
    </location>
    <ligand>
        <name>acetyl-CoA</name>
        <dbReference type="ChEBI" id="CHEBI:57288"/>
    </ligand>
</feature>
<feature type="binding site" evidence="1">
    <location>
        <position position="1870"/>
    </location>
    <ligand>
        <name>Mg(2+)</name>
        <dbReference type="ChEBI" id="CHEBI:18420"/>
    </ligand>
</feature>
<feature type="binding site" evidence="1">
    <location>
        <position position="1871"/>
    </location>
    <ligand>
        <name>Mg(2+)</name>
        <dbReference type="ChEBI" id="CHEBI:18420"/>
    </ligand>
</feature>
<feature type="modified residue" description="O-(pantetheine 4'-phosphoryl)serine" evidence="2">
    <location>
        <position position="182"/>
    </location>
</feature>
<accession>G8BAW7</accession>
<dbReference type="EC" id="2.3.1.86"/>
<dbReference type="EC" id="1.1.1.100"/>
<dbReference type="EC" id="2.3.1.41"/>
<dbReference type="EMBL" id="HE605205">
    <property type="protein sequence ID" value="CCE42191.1"/>
    <property type="molecule type" value="Genomic_DNA"/>
</dbReference>
<dbReference type="SMR" id="G8BAW7"/>
<dbReference type="STRING" id="578454.G8BAW7"/>
<dbReference type="EnsemblFungi" id="CPAR2_807400-T">
    <property type="protein sequence ID" value="CPAR2_807400-T-p1"/>
    <property type="gene ID" value="CPAR2_807400"/>
</dbReference>
<dbReference type="CGD" id="CAL0000152877">
    <property type="gene designation" value="FAS2"/>
</dbReference>
<dbReference type="VEuPathDB" id="FungiDB:CPAR2_807400"/>
<dbReference type="eggNOG" id="ENOG502QQJX">
    <property type="taxonomic scope" value="Eukaryota"/>
</dbReference>
<dbReference type="Proteomes" id="UP000005221">
    <property type="component" value="Chromosome 8"/>
</dbReference>
<dbReference type="GO" id="GO:0005835">
    <property type="term" value="C:fatty acid synthase complex"/>
    <property type="evidence" value="ECO:0007669"/>
    <property type="project" value="EnsemblFungi"/>
</dbReference>
<dbReference type="GO" id="GO:0004316">
    <property type="term" value="F:3-oxoacyl-[acyl-carrier-protein] reductase (NADPH) activity"/>
    <property type="evidence" value="ECO:0007669"/>
    <property type="project" value="UniProtKB-EC"/>
</dbReference>
<dbReference type="GO" id="GO:0004315">
    <property type="term" value="F:3-oxoacyl-[acyl-carrier-protein] synthase activity"/>
    <property type="evidence" value="ECO:0007669"/>
    <property type="project" value="UniProtKB-EC"/>
</dbReference>
<dbReference type="GO" id="GO:0004312">
    <property type="term" value="F:fatty acid synthase activity"/>
    <property type="evidence" value="ECO:0007669"/>
    <property type="project" value="EnsemblFungi"/>
</dbReference>
<dbReference type="GO" id="GO:0004321">
    <property type="term" value="F:fatty-acyl-CoA synthase activity"/>
    <property type="evidence" value="ECO:0007669"/>
    <property type="project" value="UniProtKB-EC"/>
</dbReference>
<dbReference type="GO" id="GO:0008897">
    <property type="term" value="F:holo-[acyl-carrier-protein] synthase activity"/>
    <property type="evidence" value="ECO:0007669"/>
    <property type="project" value="InterPro"/>
</dbReference>
<dbReference type="GO" id="GO:0000287">
    <property type="term" value="F:magnesium ion binding"/>
    <property type="evidence" value="ECO:0007669"/>
    <property type="project" value="InterPro"/>
</dbReference>
<dbReference type="GO" id="GO:0006633">
    <property type="term" value="P:fatty acid biosynthetic process"/>
    <property type="evidence" value="ECO:0000315"/>
    <property type="project" value="CGD"/>
</dbReference>
<dbReference type="GO" id="GO:0101026">
    <property type="term" value="P:mitotic nuclear membrane biogenesis"/>
    <property type="evidence" value="ECO:0007669"/>
    <property type="project" value="EnsemblFungi"/>
</dbReference>
<dbReference type="GO" id="GO:1900535">
    <property type="term" value="P:palmitic acid biosynthetic process"/>
    <property type="evidence" value="ECO:0007669"/>
    <property type="project" value="EnsemblFungi"/>
</dbReference>
<dbReference type="GO" id="GO:0044011">
    <property type="term" value="P:single-species biofilm formation on inanimate substrate"/>
    <property type="evidence" value="ECO:0000315"/>
    <property type="project" value="CGD"/>
</dbReference>
<dbReference type="CDD" id="cd00828">
    <property type="entry name" value="elong_cond_enzymes"/>
    <property type="match status" value="1"/>
</dbReference>
<dbReference type="CDD" id="cd08950">
    <property type="entry name" value="KR_fFAS_SDR_c_like"/>
    <property type="match status" value="1"/>
</dbReference>
<dbReference type="FunFam" id="3.90.470.20:FF:000005">
    <property type="entry name" value="Fatty acid synthase alpha subunit FasA"/>
    <property type="match status" value="1"/>
</dbReference>
<dbReference type="FunFam" id="3.30.70.2490:FF:000001">
    <property type="entry name" value="Fatty acid synthase subunit alpha"/>
    <property type="match status" value="1"/>
</dbReference>
<dbReference type="FunFam" id="3.90.25.70:FF:000001">
    <property type="entry name" value="Fatty acid synthase subunit alpha"/>
    <property type="match status" value="1"/>
</dbReference>
<dbReference type="Gene3D" id="3.30.70.2490">
    <property type="match status" value="1"/>
</dbReference>
<dbReference type="Gene3D" id="3.40.47.10">
    <property type="match status" value="1"/>
</dbReference>
<dbReference type="Gene3D" id="3.90.25.70">
    <property type="match status" value="1"/>
</dbReference>
<dbReference type="Gene3D" id="6.10.140.1410">
    <property type="match status" value="1"/>
</dbReference>
<dbReference type="Gene3D" id="6.10.250.1930">
    <property type="match status" value="1"/>
</dbReference>
<dbReference type="Gene3D" id="3.90.470.20">
    <property type="entry name" value="4'-phosphopantetheinyl transferase domain"/>
    <property type="match status" value="1"/>
</dbReference>
<dbReference type="Gene3D" id="3.40.50.720">
    <property type="entry name" value="NAD(P)-binding Rossmann-like Domain"/>
    <property type="match status" value="1"/>
</dbReference>
<dbReference type="HAMAP" id="MF_00101">
    <property type="entry name" value="AcpS"/>
    <property type="match status" value="1"/>
</dbReference>
<dbReference type="InterPro" id="IPR008278">
    <property type="entry name" value="4-PPantetheinyl_Trfase_dom"/>
</dbReference>
<dbReference type="InterPro" id="IPR037143">
    <property type="entry name" value="4-PPantetheinyl_Trfase_dom_sf"/>
</dbReference>
<dbReference type="InterPro" id="IPR002582">
    <property type="entry name" value="ACPS"/>
</dbReference>
<dbReference type="InterPro" id="IPR016035">
    <property type="entry name" value="Acyl_Trfase/lysoPLipase"/>
</dbReference>
<dbReference type="InterPro" id="IPR040899">
    <property type="entry name" value="Fas_alpha_ACP"/>
</dbReference>
<dbReference type="InterPro" id="IPR047224">
    <property type="entry name" value="FAS_alpha_su_C"/>
</dbReference>
<dbReference type="InterPro" id="IPR026025">
    <property type="entry name" value="FAS_alpha_yeast"/>
</dbReference>
<dbReference type="InterPro" id="IPR041550">
    <property type="entry name" value="FASI_helical"/>
</dbReference>
<dbReference type="InterPro" id="IPR050830">
    <property type="entry name" value="Fungal_FAS"/>
</dbReference>
<dbReference type="InterPro" id="IPR018201">
    <property type="entry name" value="Ketoacyl_synth_AS"/>
</dbReference>
<dbReference type="InterPro" id="IPR014031">
    <property type="entry name" value="Ketoacyl_synth_C"/>
</dbReference>
<dbReference type="InterPro" id="IPR014030">
    <property type="entry name" value="Ketoacyl_synth_N"/>
</dbReference>
<dbReference type="InterPro" id="IPR036291">
    <property type="entry name" value="NAD(P)-bd_dom_sf"/>
</dbReference>
<dbReference type="InterPro" id="IPR020841">
    <property type="entry name" value="PKS_Beta-ketoAc_synthase_dom"/>
</dbReference>
<dbReference type="InterPro" id="IPR009081">
    <property type="entry name" value="PP-bd_ACP"/>
</dbReference>
<dbReference type="InterPro" id="IPR004568">
    <property type="entry name" value="Ppantetheine-prot_Trfase_dom"/>
</dbReference>
<dbReference type="InterPro" id="IPR002347">
    <property type="entry name" value="SDR_fam"/>
</dbReference>
<dbReference type="InterPro" id="IPR016039">
    <property type="entry name" value="Thiolase-like"/>
</dbReference>
<dbReference type="NCBIfam" id="TIGR00556">
    <property type="entry name" value="pantethn_trn"/>
    <property type="match status" value="1"/>
</dbReference>
<dbReference type="PANTHER" id="PTHR10982:SF21">
    <property type="entry name" value="FATTY ACID SYNTHASE SUBUNIT BETA"/>
    <property type="match status" value="1"/>
</dbReference>
<dbReference type="PANTHER" id="PTHR10982">
    <property type="entry name" value="MALONYL COA-ACYL CARRIER PROTEIN TRANSACYLASE"/>
    <property type="match status" value="1"/>
</dbReference>
<dbReference type="Pfam" id="PF01648">
    <property type="entry name" value="ACPS"/>
    <property type="match status" value="1"/>
</dbReference>
<dbReference type="Pfam" id="PF00106">
    <property type="entry name" value="adh_short"/>
    <property type="match status" value="1"/>
</dbReference>
<dbReference type="Pfam" id="PF18325">
    <property type="entry name" value="Fas_alpha_ACP"/>
    <property type="match status" value="1"/>
</dbReference>
<dbReference type="Pfam" id="PF18314">
    <property type="entry name" value="FAS_I_H"/>
    <property type="match status" value="1"/>
</dbReference>
<dbReference type="Pfam" id="PF00109">
    <property type="entry name" value="ketoacyl-synt"/>
    <property type="match status" value="1"/>
</dbReference>
<dbReference type="Pfam" id="PF02801">
    <property type="entry name" value="Ketoacyl-synt_C"/>
    <property type="match status" value="1"/>
</dbReference>
<dbReference type="PIRSF" id="PIRSF000454">
    <property type="entry name" value="FAS_yeast_alpha"/>
    <property type="match status" value="1"/>
</dbReference>
<dbReference type="SUPFAM" id="SSF56214">
    <property type="entry name" value="4'-phosphopantetheinyl transferase"/>
    <property type="match status" value="1"/>
</dbReference>
<dbReference type="SUPFAM" id="SSF52151">
    <property type="entry name" value="FabD/lysophospholipase-like"/>
    <property type="match status" value="1"/>
</dbReference>
<dbReference type="SUPFAM" id="SSF51735">
    <property type="entry name" value="NAD(P)-binding Rossmann-fold domains"/>
    <property type="match status" value="1"/>
</dbReference>
<dbReference type="SUPFAM" id="SSF53901">
    <property type="entry name" value="Thiolase-like"/>
    <property type="match status" value="2"/>
</dbReference>
<dbReference type="PROSITE" id="PS50075">
    <property type="entry name" value="CARRIER"/>
    <property type="match status" value="1"/>
</dbReference>
<dbReference type="PROSITE" id="PS00606">
    <property type="entry name" value="KS3_1"/>
    <property type="match status" value="1"/>
</dbReference>
<dbReference type="PROSITE" id="PS52004">
    <property type="entry name" value="KS3_2"/>
    <property type="match status" value="1"/>
</dbReference>
<dbReference type="PROSITE" id="PS00012">
    <property type="entry name" value="PHOSPHOPANTETHEINE"/>
    <property type="match status" value="1"/>
</dbReference>
<proteinExistence type="evidence at transcript level"/>
<keyword id="KW-0275">Fatty acid biosynthesis</keyword>
<keyword id="KW-0276">Fatty acid metabolism</keyword>
<keyword id="KW-0444">Lipid biosynthesis</keyword>
<keyword id="KW-0443">Lipid metabolism</keyword>
<keyword id="KW-0460">Magnesium</keyword>
<keyword id="KW-0479">Metal-binding</keyword>
<keyword id="KW-0511">Multifunctional enzyme</keyword>
<keyword id="KW-0520">NAD</keyword>
<keyword id="KW-0521">NADP</keyword>
<keyword id="KW-0560">Oxidoreductase</keyword>
<keyword id="KW-0596">Phosphopantetheine</keyword>
<keyword id="KW-0597">Phosphoprotein</keyword>
<keyword id="KW-1185">Reference proteome</keyword>
<keyword id="KW-0808">Transferase</keyword>
<organism>
    <name type="scientific">Candida parapsilosis (strain CDC 317 / ATCC MYA-4646)</name>
    <name type="common">Yeast</name>
    <name type="synonym">Monilia parapsilosis</name>
    <dbReference type="NCBI Taxonomy" id="578454"/>
    <lineage>
        <taxon>Eukaryota</taxon>
        <taxon>Fungi</taxon>
        <taxon>Dikarya</taxon>
        <taxon>Ascomycota</taxon>
        <taxon>Saccharomycotina</taxon>
        <taxon>Pichiomycetes</taxon>
        <taxon>Debaryomycetaceae</taxon>
        <taxon>Candida/Lodderomyces clade</taxon>
        <taxon>Candida</taxon>
    </lineage>
</organism>
<comment type="function">
    <text evidence="6">Fatty acid synthetase catalyzes the formation of long-chain fatty acids from acetyl-CoA, malonyl-CoA and NADPH. The alpha subunit contains domains for: acyl carrier protein, 3-oxoacyl-[acyl-carrier-protein] reductase, and 3-oxoacyl-[acyl-carrier-protein] synthase.</text>
</comment>
<comment type="catalytic activity">
    <reaction>
        <text>acetyl-CoA + n malonyl-CoA + 2n NADPH + 4n H(+) = a long-chain-acyl-CoA + n CoA + n CO2 + 2n NADP(+).</text>
        <dbReference type="EC" id="2.3.1.86"/>
    </reaction>
</comment>
<comment type="catalytic activity">
    <reaction>
        <text>a fatty acyl-[ACP] + malonyl-[ACP] + H(+) = a 3-oxoacyl-[ACP] + holo-[ACP] + CO2</text>
        <dbReference type="Rhea" id="RHEA:22836"/>
        <dbReference type="Rhea" id="RHEA-COMP:9623"/>
        <dbReference type="Rhea" id="RHEA-COMP:9685"/>
        <dbReference type="Rhea" id="RHEA-COMP:9916"/>
        <dbReference type="Rhea" id="RHEA-COMP:14125"/>
        <dbReference type="ChEBI" id="CHEBI:15378"/>
        <dbReference type="ChEBI" id="CHEBI:16526"/>
        <dbReference type="ChEBI" id="CHEBI:64479"/>
        <dbReference type="ChEBI" id="CHEBI:78449"/>
        <dbReference type="ChEBI" id="CHEBI:78776"/>
        <dbReference type="ChEBI" id="CHEBI:138651"/>
        <dbReference type="EC" id="2.3.1.41"/>
    </reaction>
</comment>
<comment type="catalytic activity">
    <reaction>
        <text>a (3R)-hydroxyacyl-[ACP] + NADP(+) = a 3-oxoacyl-[ACP] + NADPH + H(+)</text>
        <dbReference type="Rhea" id="RHEA:17397"/>
        <dbReference type="Rhea" id="RHEA-COMP:9916"/>
        <dbReference type="Rhea" id="RHEA-COMP:9945"/>
        <dbReference type="ChEBI" id="CHEBI:15378"/>
        <dbReference type="ChEBI" id="CHEBI:57783"/>
        <dbReference type="ChEBI" id="CHEBI:58349"/>
        <dbReference type="ChEBI" id="CHEBI:78776"/>
        <dbReference type="ChEBI" id="CHEBI:78827"/>
        <dbReference type="EC" id="1.1.1.100"/>
    </reaction>
</comment>
<comment type="subunit">
    <text evidence="1">Fatty acid synthase is composed of alpha and beta subunits.</text>
</comment>
<comment type="induction">
    <text evidence="5 6">Expression significantly elevated by the presence of glucose. Down-regulated by unsaturated fatty acids oleic acid and Tween 80. Up-regulated during in vitro biofilm formation and hypoxic conditions.</text>
</comment>
<comment type="disruption phenotype">
    <text evidence="6">Essential for growth in fatty acid-free medium, but dispensable in medium with fatty acids. The growth in the presence of fatty acid depends on the type. Able to grow in a concentration-dependent manner in the presence of myristic acid, palmitic acid, or Tween 80 as the fatty acid sources, but unable to grow in the presence of unsaturated fatty like acids stearic acid or oleic acid. Intracellular survival in the murine macrophage line J774.16 is significantly reduced compared to wild type or heterozygous fungal cells. Required for systemic infection in mice. Impaired in its capacity to form biofilms on polysterene and silicone surfaces.</text>
</comment>
<comment type="miscellaneous">
    <text evidence="8">It can potentially be a fungicidal target. Inhibition of FAS2 by cerulenin impeds the growth of wild-type and heterozygous strains (PubMed:20027295).</text>
</comment>
<comment type="similarity">
    <text evidence="7">Belongs to the thiolase-like superfamily. Fungal fatty acid synthetase subunit alpha family.</text>
</comment>